<evidence type="ECO:0000255" key="1">
    <source>
        <dbReference type="HAMAP-Rule" id="MF_03005"/>
    </source>
</evidence>
<evidence type="ECO:0000255" key="2">
    <source>
        <dbReference type="PROSITE-ProRule" id="PRU01182"/>
    </source>
</evidence>
<evidence type="ECO:0000256" key="3">
    <source>
        <dbReference type="SAM" id="MobiDB-lite"/>
    </source>
</evidence>
<gene>
    <name type="ordered locus">CNBF0360</name>
</gene>
<accession>P0CO85</accession>
<accession>Q55RF5</accession>
<accession>Q5KER5</accession>
<name>EIF3F_CRYNB</name>
<reference key="1">
    <citation type="journal article" date="2005" name="Science">
        <title>The genome of the basidiomycetous yeast and human pathogen Cryptococcus neoformans.</title>
        <authorList>
            <person name="Loftus B.J."/>
            <person name="Fung E."/>
            <person name="Roncaglia P."/>
            <person name="Rowley D."/>
            <person name="Amedeo P."/>
            <person name="Bruno D."/>
            <person name="Vamathevan J."/>
            <person name="Miranda M."/>
            <person name="Anderson I.J."/>
            <person name="Fraser J.A."/>
            <person name="Allen J.E."/>
            <person name="Bosdet I.E."/>
            <person name="Brent M.R."/>
            <person name="Chiu R."/>
            <person name="Doering T.L."/>
            <person name="Donlin M.J."/>
            <person name="D'Souza C.A."/>
            <person name="Fox D.S."/>
            <person name="Grinberg V."/>
            <person name="Fu J."/>
            <person name="Fukushima M."/>
            <person name="Haas B.J."/>
            <person name="Huang J.C."/>
            <person name="Janbon G."/>
            <person name="Jones S.J.M."/>
            <person name="Koo H.L."/>
            <person name="Krzywinski M.I."/>
            <person name="Kwon-Chung K.J."/>
            <person name="Lengeler K.B."/>
            <person name="Maiti R."/>
            <person name="Marra M.A."/>
            <person name="Marra R.E."/>
            <person name="Mathewson C.A."/>
            <person name="Mitchell T.G."/>
            <person name="Pertea M."/>
            <person name="Riggs F.R."/>
            <person name="Salzberg S.L."/>
            <person name="Schein J.E."/>
            <person name="Shvartsbeyn A."/>
            <person name="Shin H."/>
            <person name="Shumway M."/>
            <person name="Specht C.A."/>
            <person name="Suh B.B."/>
            <person name="Tenney A."/>
            <person name="Utterback T.R."/>
            <person name="Wickes B.L."/>
            <person name="Wortman J.R."/>
            <person name="Wye N.H."/>
            <person name="Kronstad J.W."/>
            <person name="Lodge J.K."/>
            <person name="Heitman J."/>
            <person name="Davis R.W."/>
            <person name="Fraser C.M."/>
            <person name="Hyman R.W."/>
        </authorList>
    </citation>
    <scope>NUCLEOTIDE SEQUENCE [LARGE SCALE GENOMIC DNA]</scope>
    <source>
        <strain>B-3501A</strain>
    </source>
</reference>
<feature type="chain" id="PRO_0000410149" description="Eukaryotic translation initiation factor 3 subunit F">
    <location>
        <begin position="1"/>
        <end position="303"/>
    </location>
</feature>
<feature type="domain" description="MPN" evidence="2">
    <location>
        <begin position="27"/>
        <end position="165"/>
    </location>
</feature>
<feature type="region of interest" description="Disordered" evidence="3">
    <location>
        <begin position="1"/>
        <end position="25"/>
    </location>
</feature>
<feature type="compositionally biased region" description="Polar residues" evidence="3">
    <location>
        <begin position="1"/>
        <end position="10"/>
    </location>
</feature>
<feature type="compositionally biased region" description="Low complexity" evidence="3">
    <location>
        <begin position="12"/>
        <end position="25"/>
    </location>
</feature>
<comment type="function">
    <text evidence="1">Component of the eukaryotic translation initiation factor 3 (eIF-3) complex, which is involved in protein synthesis of a specialized repertoire of mRNAs and, together with other initiation factors, stimulates binding of mRNA and methionyl-tRNAi to the 40S ribosome. The eIF-3 complex specifically targets and initiates translation of a subset of mRNAs involved in cell proliferation.</text>
</comment>
<comment type="subunit">
    <text evidence="1">Component of the eukaryotic translation initiation factor 3 (eIF-3) complex.</text>
</comment>
<comment type="subcellular location">
    <subcellularLocation>
        <location evidence="1">Cytoplasm</location>
    </subcellularLocation>
</comment>
<comment type="similarity">
    <text evidence="1">Belongs to the eIF-3 subunit F family.</text>
</comment>
<dbReference type="EMBL" id="AAEY01000030">
    <property type="protein sequence ID" value="EAL20224.1"/>
    <property type="molecule type" value="Genomic_DNA"/>
</dbReference>
<dbReference type="RefSeq" id="XP_774871.1">
    <property type="nucleotide sequence ID" value="XM_769778.1"/>
</dbReference>
<dbReference type="SMR" id="P0CO85"/>
<dbReference type="EnsemblFungi" id="AAW44109">
    <property type="protein sequence ID" value="AAW44109"/>
    <property type="gene ID" value="CNF04540"/>
</dbReference>
<dbReference type="GeneID" id="4936588"/>
<dbReference type="KEGG" id="cnb:CNBF0360"/>
<dbReference type="VEuPathDB" id="FungiDB:CNBF0360"/>
<dbReference type="HOGENOM" id="CLU_027018_0_2_1"/>
<dbReference type="OrthoDB" id="6848at5206"/>
<dbReference type="GO" id="GO:0016282">
    <property type="term" value="C:eukaryotic 43S preinitiation complex"/>
    <property type="evidence" value="ECO:0007669"/>
    <property type="project" value="UniProtKB-UniRule"/>
</dbReference>
<dbReference type="GO" id="GO:0033290">
    <property type="term" value="C:eukaryotic 48S preinitiation complex"/>
    <property type="evidence" value="ECO:0007669"/>
    <property type="project" value="UniProtKB-UniRule"/>
</dbReference>
<dbReference type="GO" id="GO:0071540">
    <property type="term" value="C:eukaryotic translation initiation factor 3 complex, eIF3e"/>
    <property type="evidence" value="ECO:0007669"/>
    <property type="project" value="EnsemblFungi"/>
</dbReference>
<dbReference type="GO" id="GO:0071541">
    <property type="term" value="C:eukaryotic translation initiation factor 3 complex, eIF3m"/>
    <property type="evidence" value="ECO:0007669"/>
    <property type="project" value="EnsemblFungi"/>
</dbReference>
<dbReference type="GO" id="GO:0008237">
    <property type="term" value="F:metallopeptidase activity"/>
    <property type="evidence" value="ECO:0007669"/>
    <property type="project" value="InterPro"/>
</dbReference>
<dbReference type="GO" id="GO:0003743">
    <property type="term" value="F:translation initiation factor activity"/>
    <property type="evidence" value="ECO:0007669"/>
    <property type="project" value="UniProtKB-UniRule"/>
</dbReference>
<dbReference type="GO" id="GO:0031369">
    <property type="term" value="F:translation initiation factor binding"/>
    <property type="evidence" value="ECO:0007669"/>
    <property type="project" value="InterPro"/>
</dbReference>
<dbReference type="GO" id="GO:0001732">
    <property type="term" value="P:formation of cytoplasmic translation initiation complex"/>
    <property type="evidence" value="ECO:0007669"/>
    <property type="project" value="UniProtKB-UniRule"/>
</dbReference>
<dbReference type="CDD" id="cd08064">
    <property type="entry name" value="MPN_eIF3f"/>
    <property type="match status" value="1"/>
</dbReference>
<dbReference type="FunFam" id="3.40.140.10:FF:000081">
    <property type="entry name" value="Eukaryotic translation initiation factor 3 subunit F"/>
    <property type="match status" value="1"/>
</dbReference>
<dbReference type="Gene3D" id="3.40.140.10">
    <property type="entry name" value="Cytidine Deaminase, domain 2"/>
    <property type="match status" value="1"/>
</dbReference>
<dbReference type="HAMAP" id="MF_03005">
    <property type="entry name" value="eIF3f"/>
    <property type="match status" value="1"/>
</dbReference>
<dbReference type="InterPro" id="IPR027531">
    <property type="entry name" value="eIF3f"/>
</dbReference>
<dbReference type="InterPro" id="IPR024969">
    <property type="entry name" value="EIF3F/CSN6-like_C"/>
</dbReference>
<dbReference type="InterPro" id="IPR000555">
    <property type="entry name" value="JAMM/MPN+_dom"/>
</dbReference>
<dbReference type="InterPro" id="IPR037518">
    <property type="entry name" value="MPN"/>
</dbReference>
<dbReference type="PANTHER" id="PTHR10540:SF6">
    <property type="entry name" value="EUKARYOTIC TRANSLATION INITIATION FACTOR 3 SUBUNIT F"/>
    <property type="match status" value="1"/>
</dbReference>
<dbReference type="PANTHER" id="PTHR10540">
    <property type="entry name" value="EUKARYOTIC TRANSLATION INITIATION FACTOR 3 SUBUNIT F-RELATED"/>
    <property type="match status" value="1"/>
</dbReference>
<dbReference type="Pfam" id="PF01398">
    <property type="entry name" value="JAB"/>
    <property type="match status" value="1"/>
</dbReference>
<dbReference type="Pfam" id="PF13012">
    <property type="entry name" value="MitMem_reg"/>
    <property type="match status" value="1"/>
</dbReference>
<dbReference type="SMART" id="SM00232">
    <property type="entry name" value="JAB_MPN"/>
    <property type="match status" value="1"/>
</dbReference>
<dbReference type="PROSITE" id="PS50249">
    <property type="entry name" value="MPN"/>
    <property type="match status" value="1"/>
</dbReference>
<keyword id="KW-0963">Cytoplasm</keyword>
<keyword id="KW-0396">Initiation factor</keyword>
<keyword id="KW-0648">Protein biosynthesis</keyword>
<organism>
    <name type="scientific">Cryptococcus neoformans var. neoformans serotype D (strain B-3501A)</name>
    <name type="common">Filobasidiella neoformans</name>
    <dbReference type="NCBI Taxonomy" id="283643"/>
    <lineage>
        <taxon>Eukaryota</taxon>
        <taxon>Fungi</taxon>
        <taxon>Dikarya</taxon>
        <taxon>Basidiomycota</taxon>
        <taxon>Agaricomycotina</taxon>
        <taxon>Tremellomycetes</taxon>
        <taxon>Tremellales</taxon>
        <taxon>Cryptococcaceae</taxon>
        <taxon>Cryptococcus</taxon>
        <taxon>Cryptococcus neoformans species complex</taxon>
    </lineage>
</organism>
<sequence length="303" mass="32591">MSLDTSSSAIHLQLPPTSSSLRPPSQITVHPSVIAQILTHHSRHSADSESTRVIGALMGNRSDNGQEVDIRSCFAVPHTEQGQQISVDRPFQQDMVNFLAKNGTKEVIVGWYASQKTVNSNSAIIQEYFSFETNPYPAVHLTVDTDIEESGKGLGVKGWVSQPLGLTSKSECSVFVPVPVSIKYADSERAALDLLTAPQPTPSPALPPLPTLSNSLSQLSSLIDQCLAYVQSVNNGSQTPDVEIGRYLLEGLGRWSASGNEDEGGVKAGLQDTLTVEYLSSLVRSQVELAGRLSLLQQPVAQQ</sequence>
<proteinExistence type="inferred from homology"/>
<protein>
    <recommendedName>
        <fullName evidence="1">Eukaryotic translation initiation factor 3 subunit F</fullName>
        <shortName evidence="1">eIF3f</shortName>
    </recommendedName>
</protein>